<proteinExistence type="evidence at transcript level"/>
<accession>Q4H2R2</accession>
<comment type="function">
    <text evidence="1">Component of the FACT complex, a general chromatin factor that acts to reorganize nucleosomes. The FACT complex is involved in multiple processes that require DNA as a template such as mRNA elongation, DNA replication and DNA repair. During transcription elongation the FACT complex acts as a histone chaperone that both destabilizes and restores nucleosomal structure. It facilitates the passage of RNA polymerase II and transcription by promoting the dissociation of one histone H2A-H2B dimer from the nucleosome, then subsequently promotes the reestablishment of the nucleosome following the passage of RNA polymerase II. Binds specifically to double-stranded DNA (By similarity).</text>
</comment>
<comment type="subunit">
    <text evidence="1">Component of the FACT complex, a stable heterodimer of SSRP1 and SUPT16H. May also be a component of a CK2-SPT16-SSRP1 complex, composed of SSRP1, SUPT16H, CSNK2A1, CSNK2A2 and CSNK2B (By similarity).</text>
</comment>
<comment type="subcellular location">
    <subcellularLocation>
        <location evidence="2">Nucleus</location>
    </subcellularLocation>
    <subcellularLocation>
        <location evidence="2">Chromosome</location>
    </subcellularLocation>
    <subcellularLocation>
        <location evidence="2">Nucleus</location>
        <location evidence="2">Nucleolus</location>
    </subcellularLocation>
    <text evidence="2">Colocalizes with RNA polymerase II on chromatin. Recruited to actively transcribed loci.</text>
</comment>
<comment type="similarity">
    <text evidence="5">Belongs to the SSRP1 family.</text>
</comment>
<dbReference type="EMBL" id="AB210710">
    <property type="protein sequence ID" value="BAE06715.1"/>
    <property type="molecule type" value="mRNA"/>
</dbReference>
<dbReference type="RefSeq" id="NP_001071827.1">
    <property type="nucleotide sequence ID" value="NM_001078359.1"/>
</dbReference>
<dbReference type="SMR" id="Q4H2R2"/>
<dbReference type="FunCoup" id="Q4H2R2">
    <property type="interactions" value="616"/>
</dbReference>
<dbReference type="STRING" id="7719.ENSCINP00000000932"/>
<dbReference type="GeneID" id="778769"/>
<dbReference type="KEGG" id="cin:778769"/>
<dbReference type="CTD" id="6749"/>
<dbReference type="eggNOG" id="KOG0526">
    <property type="taxonomic scope" value="Eukaryota"/>
</dbReference>
<dbReference type="InParanoid" id="Q4H2R2"/>
<dbReference type="OrthoDB" id="498543at2759"/>
<dbReference type="Proteomes" id="UP000008144">
    <property type="component" value="Unplaced"/>
</dbReference>
<dbReference type="GO" id="GO:0035101">
    <property type="term" value="C:FACT complex"/>
    <property type="evidence" value="ECO:0000318"/>
    <property type="project" value="GO_Central"/>
</dbReference>
<dbReference type="GO" id="GO:0005730">
    <property type="term" value="C:nucleolus"/>
    <property type="evidence" value="ECO:0007669"/>
    <property type="project" value="UniProtKB-SubCell"/>
</dbReference>
<dbReference type="GO" id="GO:0003677">
    <property type="term" value="F:DNA binding"/>
    <property type="evidence" value="ECO:0007669"/>
    <property type="project" value="UniProtKB-KW"/>
</dbReference>
<dbReference type="GO" id="GO:0042393">
    <property type="term" value="F:histone binding"/>
    <property type="evidence" value="ECO:0000318"/>
    <property type="project" value="GO_Central"/>
</dbReference>
<dbReference type="GO" id="GO:0031491">
    <property type="term" value="F:nucleosome binding"/>
    <property type="evidence" value="ECO:0000318"/>
    <property type="project" value="GO_Central"/>
</dbReference>
<dbReference type="GO" id="GO:0006281">
    <property type="term" value="P:DNA repair"/>
    <property type="evidence" value="ECO:0007669"/>
    <property type="project" value="UniProtKB-KW"/>
</dbReference>
<dbReference type="GO" id="GO:0006260">
    <property type="term" value="P:DNA replication"/>
    <property type="evidence" value="ECO:0007669"/>
    <property type="project" value="UniProtKB-KW"/>
</dbReference>
<dbReference type="GO" id="GO:1902275">
    <property type="term" value="P:regulation of chromatin organization"/>
    <property type="evidence" value="ECO:0000318"/>
    <property type="project" value="GO_Central"/>
</dbReference>
<dbReference type="CDD" id="cd21994">
    <property type="entry name" value="HMG-box_SSRP1-like"/>
    <property type="match status" value="1"/>
</dbReference>
<dbReference type="CDD" id="cd13230">
    <property type="entry name" value="PH1_SSRP1-like"/>
    <property type="match status" value="1"/>
</dbReference>
<dbReference type="CDD" id="cd13231">
    <property type="entry name" value="PH2_SSRP1-like"/>
    <property type="match status" value="1"/>
</dbReference>
<dbReference type="FunFam" id="2.30.29.220:FF:000001">
    <property type="entry name" value="FACT complex subunit SSRP1"/>
    <property type="match status" value="1"/>
</dbReference>
<dbReference type="FunFam" id="2.30.29.30:FF:000119">
    <property type="entry name" value="FACT complex subunit SSRP1"/>
    <property type="match status" value="1"/>
</dbReference>
<dbReference type="FunFam" id="2.30.29.30:FF:000214">
    <property type="entry name" value="FACT complex subunit SSRP1"/>
    <property type="match status" value="1"/>
</dbReference>
<dbReference type="FunFam" id="2.30.29.150:FF:000001">
    <property type="entry name" value="Fact complex subunit ssrp1"/>
    <property type="match status" value="1"/>
</dbReference>
<dbReference type="Gene3D" id="2.30.29.150">
    <property type="match status" value="1"/>
</dbReference>
<dbReference type="Gene3D" id="1.10.30.10">
    <property type="entry name" value="High mobility group box domain"/>
    <property type="match status" value="1"/>
</dbReference>
<dbReference type="Gene3D" id="2.30.29.30">
    <property type="entry name" value="Pleckstrin-homology domain (PH domain)/Phosphotyrosine-binding domain (PTB)"/>
    <property type="match status" value="2"/>
</dbReference>
<dbReference type="Gene3D" id="2.30.29.220">
    <property type="entry name" value="Structure-specific recognition protein (SSRP1)"/>
    <property type="match status" value="1"/>
</dbReference>
<dbReference type="InterPro" id="IPR009071">
    <property type="entry name" value="HMG_box_dom"/>
</dbReference>
<dbReference type="InterPro" id="IPR036910">
    <property type="entry name" value="HMG_box_dom_sf"/>
</dbReference>
<dbReference type="InterPro" id="IPR011993">
    <property type="entry name" value="PH-like_dom_sf"/>
</dbReference>
<dbReference type="InterPro" id="IPR013719">
    <property type="entry name" value="RTT106/SPT16-like_middle_dom"/>
</dbReference>
<dbReference type="InterPro" id="IPR050454">
    <property type="entry name" value="RTT106/SSRP1_HistChap/FACT"/>
</dbReference>
<dbReference type="InterPro" id="IPR048993">
    <property type="entry name" value="SSRP1-like_PH1"/>
</dbReference>
<dbReference type="InterPro" id="IPR000969">
    <property type="entry name" value="SSRP1/POB3"/>
</dbReference>
<dbReference type="InterPro" id="IPR035417">
    <property type="entry name" value="SSRP1/POB3_N"/>
</dbReference>
<dbReference type="InterPro" id="IPR024954">
    <property type="entry name" value="SSRP1_DD"/>
</dbReference>
<dbReference type="InterPro" id="IPR038167">
    <property type="entry name" value="SSRP1_sf"/>
</dbReference>
<dbReference type="PANTHER" id="PTHR45849">
    <property type="entry name" value="FACT COMPLEX SUBUNIT SSRP1"/>
    <property type="match status" value="1"/>
</dbReference>
<dbReference type="PANTHER" id="PTHR45849:SF1">
    <property type="entry name" value="FACT COMPLEX SUBUNIT SSRP1"/>
    <property type="match status" value="1"/>
</dbReference>
<dbReference type="Pfam" id="PF00505">
    <property type="entry name" value="HMG_box"/>
    <property type="match status" value="1"/>
</dbReference>
<dbReference type="Pfam" id="PF21103">
    <property type="entry name" value="PH1_SSRP1-like"/>
    <property type="match status" value="1"/>
</dbReference>
<dbReference type="Pfam" id="PF17292">
    <property type="entry name" value="POB3_N"/>
    <property type="match status" value="1"/>
</dbReference>
<dbReference type="Pfam" id="PF08512">
    <property type="entry name" value="Rttp106-like_middle"/>
    <property type="match status" value="1"/>
</dbReference>
<dbReference type="Pfam" id="PF03531">
    <property type="entry name" value="SSrecog"/>
    <property type="match status" value="1"/>
</dbReference>
<dbReference type="PRINTS" id="PR00887">
    <property type="entry name" value="SSRCOGNITION"/>
</dbReference>
<dbReference type="SMART" id="SM00398">
    <property type="entry name" value="HMG"/>
    <property type="match status" value="1"/>
</dbReference>
<dbReference type="SMART" id="SM01287">
    <property type="entry name" value="Rtt106"/>
    <property type="match status" value="1"/>
</dbReference>
<dbReference type="SUPFAM" id="SSF47095">
    <property type="entry name" value="HMG-box"/>
    <property type="match status" value="1"/>
</dbReference>
<dbReference type="SUPFAM" id="SSF50729">
    <property type="entry name" value="PH domain-like"/>
    <property type="match status" value="1"/>
</dbReference>
<dbReference type="PROSITE" id="PS50118">
    <property type="entry name" value="HMG_BOX_2"/>
    <property type="match status" value="1"/>
</dbReference>
<keyword id="KW-0158">Chromosome</keyword>
<keyword id="KW-0227">DNA damage</keyword>
<keyword id="KW-0234">DNA repair</keyword>
<keyword id="KW-0235">DNA replication</keyword>
<keyword id="KW-0238">DNA-binding</keyword>
<keyword id="KW-0539">Nucleus</keyword>
<keyword id="KW-1185">Reference proteome</keyword>
<keyword id="KW-0804">Transcription</keyword>
<keyword id="KW-0805">Transcription regulation</keyword>
<name>SSRP1_CIOIN</name>
<evidence type="ECO:0000250" key="1"/>
<evidence type="ECO:0000250" key="2">
    <source>
        <dbReference type="UniProtKB" id="Q05344"/>
    </source>
</evidence>
<evidence type="ECO:0000255" key="3">
    <source>
        <dbReference type="PROSITE-ProRule" id="PRU00267"/>
    </source>
</evidence>
<evidence type="ECO:0000256" key="4">
    <source>
        <dbReference type="SAM" id="MobiDB-lite"/>
    </source>
</evidence>
<evidence type="ECO:0000305" key="5"/>
<sequence length="704" mass="81570">MTENGQFLDYKNVFQENRGAMHDGRLQLLKEKIVFKNNKTGKIDSIQQNDLHSALWRRVARDFELKFQMNSGQVFRFDGFKEMEFERLKDFVKNYYKIDLEHQELSGKGWNWGTTDFEGNEMMFQVGQKLSFEIPLNNVSQCTQNKDEVTMEFHQNDDSELSLMEMRFFIPPSQDEMIDKVKDFHDNVMAKADVLQVKGTAICVFQDLQCLTPRGRYDIRMYPKFIQLHGKTFDYKITYTSILRLFLLPHKDQRQIFFVVSLDPPLKQGMTRYHFLILLFYKEDDLAVELSLPDDEIEERFGGKLQKDMSGPMYEVVSRVMKHLVQRKITVPGSFKGLNGVQSITCTYKASSGFLFPLERGFMYVHKPPVHIRFDEIAYVNFARGTTKINKSFDFEIETRSKNNFVFSNIERDQYASLYDFVHNKQLKIKNIGKDGADFDLMVDSDEDADVHDPYMERMKQEAAEREKQVDDDDDDESEDDDFQPETNVAEVEEEYNSDVGSASSGASDEEEEDGEEEVEEKPKKRKKEKVMKERRQKETPGKVKRKKKDPNAPKRPQSAYFLWLNENRGRFKAENKGISVTELTKLAGKEWKKIDPDEKQKFERMYQKSKVKFDAAMKEYKSQGGGRTSSSPAKKMKMKSPKPSKASSSMVSPSKFKSKEFITESDSLSSSDSDAEVKSKNSPPADEESASESEAASEEEESD</sequence>
<organism>
    <name type="scientific">Ciona intestinalis</name>
    <name type="common">Transparent sea squirt</name>
    <name type="synonym">Ascidia intestinalis</name>
    <dbReference type="NCBI Taxonomy" id="7719"/>
    <lineage>
        <taxon>Eukaryota</taxon>
        <taxon>Metazoa</taxon>
        <taxon>Chordata</taxon>
        <taxon>Tunicata</taxon>
        <taxon>Ascidiacea</taxon>
        <taxon>Phlebobranchia</taxon>
        <taxon>Cionidae</taxon>
        <taxon>Ciona</taxon>
    </lineage>
</organism>
<reference key="1">
    <citation type="submission" date="2005-04" db="EMBL/GenBank/DDBJ databases">
        <title>Expressed genes in Ciona intestinalis.</title>
        <authorList>
            <person name="Satou Y."/>
        </authorList>
    </citation>
    <scope>NUCLEOTIDE SEQUENCE [LARGE SCALE MRNA]</scope>
</reference>
<feature type="chain" id="PRO_0000245192" description="FACT complex subunit SSRP1">
    <location>
        <begin position="1"/>
        <end position="704"/>
    </location>
</feature>
<feature type="DNA-binding region" description="HMG box" evidence="3">
    <location>
        <begin position="554"/>
        <end position="622"/>
    </location>
</feature>
<feature type="region of interest" description="Disordered" evidence="4">
    <location>
        <begin position="460"/>
        <end position="562"/>
    </location>
</feature>
<feature type="region of interest" description="Disordered" evidence="4">
    <location>
        <begin position="618"/>
        <end position="704"/>
    </location>
</feature>
<feature type="compositionally biased region" description="Basic and acidic residues" evidence="4">
    <location>
        <begin position="460"/>
        <end position="469"/>
    </location>
</feature>
<feature type="compositionally biased region" description="Acidic residues" evidence="4">
    <location>
        <begin position="470"/>
        <end position="484"/>
    </location>
</feature>
<feature type="compositionally biased region" description="Low complexity" evidence="4">
    <location>
        <begin position="498"/>
        <end position="507"/>
    </location>
</feature>
<feature type="compositionally biased region" description="Acidic residues" evidence="4">
    <location>
        <begin position="508"/>
        <end position="520"/>
    </location>
</feature>
<feature type="compositionally biased region" description="Basic and acidic residues" evidence="4">
    <location>
        <begin position="531"/>
        <end position="542"/>
    </location>
</feature>
<feature type="compositionally biased region" description="Low complexity" evidence="4">
    <location>
        <begin position="644"/>
        <end position="656"/>
    </location>
</feature>
<feature type="compositionally biased region" description="Acidic residues" evidence="4">
    <location>
        <begin position="686"/>
        <end position="704"/>
    </location>
</feature>
<protein>
    <recommendedName>
        <fullName>FACT complex subunit SSRP1</fullName>
    </recommendedName>
    <alternativeName>
        <fullName>Facilitates chromatin transcription complex subunit SSRP1</fullName>
    </alternativeName>
    <alternativeName>
        <fullName>Structure-specific recognition protein 1</fullName>
    </alternativeName>
</protein>
<gene>
    <name type="primary">SSRP1</name>
    <name type="ORF">ciad093d18</name>
</gene>